<proteinExistence type="inferred from homology"/>
<accession>Q9ZLB6</accession>
<keyword id="KW-0285">Flavoprotein</keyword>
<keyword id="KW-0288">FMN</keyword>
<keyword id="KW-0521">NADP</keyword>
<keyword id="KW-0560">Oxidoreductase</keyword>
<keyword id="KW-0694">RNA-binding</keyword>
<keyword id="KW-0819">tRNA processing</keyword>
<keyword id="KW-0820">tRNA-binding</keyword>
<sequence length="328" mass="37219">MDFKNKKWLFLAPLAGYTDLPFRSVVKKFGVDVTTSEMVSSHSLVYAFDKTSKMLEKSPLEDHFMAQISGSKESVVKEAVEKINALDHVSGIDFNCGCPAPKVANHGNGSGLLKDLNHLVEILKVIRENTNKKITSVKVRLGFEKKIPKEIAHALNDAPVDYVVVHGRTRSDRYQKDKIDYESIALMKKILKKPVIANGEIDSVKKAFEVLQITQADGLMIGRATLRAPWIFWQIRNNTTELPAVVKKDLVLEHFDKMVEFYGDRGVIMFRKNLHAYAKGEMQASAFRNCVNTLTEIKSMRESIEEFFNQEMLQSEVPLWVELNQKSV</sequence>
<reference key="1">
    <citation type="journal article" date="1999" name="Nature">
        <title>Genomic sequence comparison of two unrelated isolates of the human gastric pathogen Helicobacter pylori.</title>
        <authorList>
            <person name="Alm R.A."/>
            <person name="Ling L.-S.L."/>
            <person name="Moir D.T."/>
            <person name="King B.L."/>
            <person name="Brown E.D."/>
            <person name="Doig P.C."/>
            <person name="Smith D.R."/>
            <person name="Noonan B."/>
            <person name="Guild B.C."/>
            <person name="deJonge B.L."/>
            <person name="Carmel G."/>
            <person name="Tummino P.J."/>
            <person name="Caruso A."/>
            <person name="Uria-Nickelsen M."/>
            <person name="Mills D.M."/>
            <person name="Ives C."/>
            <person name="Gibson R."/>
            <person name="Merberg D."/>
            <person name="Mills S.D."/>
            <person name="Jiang Q."/>
            <person name="Taylor D.E."/>
            <person name="Vovis G.F."/>
            <person name="Trust T.J."/>
        </authorList>
    </citation>
    <scope>NUCLEOTIDE SEQUENCE [LARGE SCALE GENOMIC DNA]</scope>
    <source>
        <strain>J99 / ATCC 700824</strain>
    </source>
</reference>
<protein>
    <recommendedName>
        <fullName>Probable tRNA-dihydrouridine synthase</fullName>
        <ecNumber>1.3.1.-</ecNumber>
    </recommendedName>
</protein>
<comment type="function">
    <text evidence="1">Catalyzes the synthesis of 5,6-dihydrouridine (D), a modified base found in the D-loop of most tRNAs, via the reduction of the C5-C6 double bond in target uridines.</text>
</comment>
<comment type="catalytic activity">
    <reaction evidence="1">
        <text>a 5,6-dihydrouridine in tRNA + NAD(+) = a uridine in tRNA + NADH + H(+)</text>
        <dbReference type="Rhea" id="RHEA:54452"/>
        <dbReference type="Rhea" id="RHEA-COMP:13339"/>
        <dbReference type="Rhea" id="RHEA-COMP:13887"/>
        <dbReference type="ChEBI" id="CHEBI:15378"/>
        <dbReference type="ChEBI" id="CHEBI:57540"/>
        <dbReference type="ChEBI" id="CHEBI:57945"/>
        <dbReference type="ChEBI" id="CHEBI:65315"/>
        <dbReference type="ChEBI" id="CHEBI:74443"/>
    </reaction>
</comment>
<comment type="catalytic activity">
    <reaction evidence="1">
        <text>a 5,6-dihydrouridine in tRNA + NADP(+) = a uridine in tRNA + NADPH + H(+)</text>
        <dbReference type="Rhea" id="RHEA:23624"/>
        <dbReference type="Rhea" id="RHEA-COMP:13339"/>
        <dbReference type="Rhea" id="RHEA-COMP:13887"/>
        <dbReference type="ChEBI" id="CHEBI:15378"/>
        <dbReference type="ChEBI" id="CHEBI:57783"/>
        <dbReference type="ChEBI" id="CHEBI:58349"/>
        <dbReference type="ChEBI" id="CHEBI:65315"/>
        <dbReference type="ChEBI" id="CHEBI:74443"/>
    </reaction>
</comment>
<comment type="cofactor">
    <cofactor evidence="1">
        <name>FMN</name>
        <dbReference type="ChEBI" id="CHEBI:58210"/>
    </cofactor>
</comment>
<comment type="similarity">
    <text evidence="3">Belongs to the Dus family.</text>
</comment>
<name>DUS_HELPJ</name>
<feature type="chain" id="PRO_0000162135" description="Probable tRNA-dihydrouridine synthase">
    <location>
        <begin position="1"/>
        <end position="328"/>
    </location>
</feature>
<feature type="active site" description="Proton donor" evidence="2">
    <location>
        <position position="98"/>
    </location>
</feature>
<feature type="binding site" evidence="1">
    <location>
        <begin position="13"/>
        <end position="15"/>
    </location>
    <ligand>
        <name>FMN</name>
        <dbReference type="ChEBI" id="CHEBI:58210"/>
    </ligand>
</feature>
<feature type="binding site" evidence="1">
    <location>
        <position position="67"/>
    </location>
    <ligand>
        <name>FMN</name>
        <dbReference type="ChEBI" id="CHEBI:58210"/>
    </ligand>
</feature>
<feature type="binding site" evidence="1">
    <location>
        <position position="138"/>
    </location>
    <ligand>
        <name>FMN</name>
        <dbReference type="ChEBI" id="CHEBI:58210"/>
    </ligand>
</feature>
<feature type="binding site" evidence="1">
    <location>
        <begin position="198"/>
        <end position="200"/>
    </location>
    <ligand>
        <name>FMN</name>
        <dbReference type="ChEBI" id="CHEBI:58210"/>
    </ligand>
</feature>
<feature type="binding site" evidence="1">
    <location>
        <begin position="222"/>
        <end position="223"/>
    </location>
    <ligand>
        <name>FMN</name>
        <dbReference type="ChEBI" id="CHEBI:58210"/>
    </ligand>
</feature>
<evidence type="ECO:0000250" key="1">
    <source>
        <dbReference type="UniProtKB" id="P33371"/>
    </source>
</evidence>
<evidence type="ECO:0000250" key="2">
    <source>
        <dbReference type="UniProtKB" id="Q5SMC7"/>
    </source>
</evidence>
<evidence type="ECO:0000305" key="3"/>
<gene>
    <name type="primary">dus</name>
    <name type="ordered locus">jhp_0664</name>
</gene>
<dbReference type="EC" id="1.3.1.-"/>
<dbReference type="EMBL" id="AE001439">
    <property type="protein sequence ID" value="AAD06235.1"/>
    <property type="molecule type" value="Genomic_DNA"/>
</dbReference>
<dbReference type="PIR" id="G71904">
    <property type="entry name" value="G71904"/>
</dbReference>
<dbReference type="RefSeq" id="WP_000346155.1">
    <property type="nucleotide sequence ID" value="NC_000921.1"/>
</dbReference>
<dbReference type="SMR" id="Q9ZLB6"/>
<dbReference type="KEGG" id="hpj:jhp_0664"/>
<dbReference type="PATRIC" id="fig|85963.30.peg.316"/>
<dbReference type="eggNOG" id="COG0042">
    <property type="taxonomic scope" value="Bacteria"/>
</dbReference>
<dbReference type="Proteomes" id="UP000000804">
    <property type="component" value="Chromosome"/>
</dbReference>
<dbReference type="GO" id="GO:0050660">
    <property type="term" value="F:flavin adenine dinucleotide binding"/>
    <property type="evidence" value="ECO:0007669"/>
    <property type="project" value="InterPro"/>
</dbReference>
<dbReference type="GO" id="GO:0000049">
    <property type="term" value="F:tRNA binding"/>
    <property type="evidence" value="ECO:0007669"/>
    <property type="project" value="UniProtKB-KW"/>
</dbReference>
<dbReference type="GO" id="GO:0017150">
    <property type="term" value="F:tRNA dihydrouridine synthase activity"/>
    <property type="evidence" value="ECO:0007669"/>
    <property type="project" value="InterPro"/>
</dbReference>
<dbReference type="CDD" id="cd02801">
    <property type="entry name" value="DUS_like_FMN"/>
    <property type="match status" value="1"/>
</dbReference>
<dbReference type="FunFam" id="3.20.20.70:FF:000395">
    <property type="entry name" value="Probable tRNA-dihydrouridine synthase"/>
    <property type="match status" value="1"/>
</dbReference>
<dbReference type="Gene3D" id="3.20.20.70">
    <property type="entry name" value="Aldolase class I"/>
    <property type="match status" value="1"/>
</dbReference>
<dbReference type="Gene3D" id="1.10.1200.80">
    <property type="entry name" value="Putative flavin oxidoreducatase, domain 2"/>
    <property type="match status" value="1"/>
</dbReference>
<dbReference type="InterPro" id="IPR013785">
    <property type="entry name" value="Aldolase_TIM"/>
</dbReference>
<dbReference type="InterPro" id="IPR035587">
    <property type="entry name" value="DUS-like_FMN-bd"/>
</dbReference>
<dbReference type="InterPro" id="IPR001269">
    <property type="entry name" value="DUS_fam"/>
</dbReference>
<dbReference type="InterPro" id="IPR024036">
    <property type="entry name" value="tRNA-dHydroUridine_Synthase_C"/>
</dbReference>
<dbReference type="InterPro" id="IPR018517">
    <property type="entry name" value="tRNA_hU_synthase_CS"/>
</dbReference>
<dbReference type="PANTHER" id="PTHR45846">
    <property type="entry name" value="TRNA-DIHYDROURIDINE(47) SYNTHASE [NAD(P)(+)]-LIKE"/>
    <property type="match status" value="1"/>
</dbReference>
<dbReference type="PANTHER" id="PTHR45846:SF1">
    <property type="entry name" value="TRNA-DIHYDROURIDINE(47) SYNTHASE [NAD(P)(+)]-LIKE"/>
    <property type="match status" value="1"/>
</dbReference>
<dbReference type="Pfam" id="PF01207">
    <property type="entry name" value="Dus"/>
    <property type="match status" value="1"/>
</dbReference>
<dbReference type="PIRSF" id="PIRSF006621">
    <property type="entry name" value="Dus"/>
    <property type="match status" value="1"/>
</dbReference>
<dbReference type="SUPFAM" id="SSF51395">
    <property type="entry name" value="FMN-linked oxidoreductases"/>
    <property type="match status" value="1"/>
</dbReference>
<dbReference type="PROSITE" id="PS01136">
    <property type="entry name" value="UPF0034"/>
    <property type="match status" value="1"/>
</dbReference>
<organism>
    <name type="scientific">Helicobacter pylori (strain J99 / ATCC 700824)</name>
    <name type="common">Campylobacter pylori J99</name>
    <dbReference type="NCBI Taxonomy" id="85963"/>
    <lineage>
        <taxon>Bacteria</taxon>
        <taxon>Pseudomonadati</taxon>
        <taxon>Campylobacterota</taxon>
        <taxon>Epsilonproteobacteria</taxon>
        <taxon>Campylobacterales</taxon>
        <taxon>Helicobacteraceae</taxon>
        <taxon>Helicobacter</taxon>
    </lineage>
</organism>